<sequence length="67" mass="7741">MPADRLTTLEIRAAEQERTIEELSGQIAEQWTVIERMQRKLDALTDRFLALEEQAAPDVPVTKPPHW</sequence>
<dbReference type="EMBL" id="BA000012">
    <property type="protein sequence ID" value="BAB50105.1"/>
    <property type="molecule type" value="Genomic_DNA"/>
</dbReference>
<dbReference type="SMR" id="Q98GW1"/>
<dbReference type="KEGG" id="mlo:msl3152"/>
<dbReference type="eggNOG" id="COG2900">
    <property type="taxonomic scope" value="Bacteria"/>
</dbReference>
<dbReference type="HOGENOM" id="CLU_180796_5_0_5"/>
<dbReference type="Proteomes" id="UP000000552">
    <property type="component" value="Chromosome"/>
</dbReference>
<dbReference type="HAMAP" id="MF_00715">
    <property type="entry name" value="SlyX"/>
    <property type="match status" value="1"/>
</dbReference>
<dbReference type="InterPro" id="IPR007236">
    <property type="entry name" value="SlyX"/>
</dbReference>
<dbReference type="NCBIfam" id="NF001962">
    <property type="entry name" value="PRK00736.1"/>
    <property type="match status" value="1"/>
</dbReference>
<dbReference type="PANTHER" id="PTHR36508">
    <property type="entry name" value="PROTEIN SLYX"/>
    <property type="match status" value="1"/>
</dbReference>
<dbReference type="PANTHER" id="PTHR36508:SF1">
    <property type="entry name" value="PROTEIN SLYX"/>
    <property type="match status" value="1"/>
</dbReference>
<dbReference type="Pfam" id="PF04102">
    <property type="entry name" value="SlyX"/>
    <property type="match status" value="1"/>
</dbReference>
<organism>
    <name type="scientific">Mesorhizobium japonicum (strain LMG 29417 / CECT 9101 / MAFF 303099)</name>
    <name type="common">Mesorhizobium loti (strain MAFF 303099)</name>
    <dbReference type="NCBI Taxonomy" id="266835"/>
    <lineage>
        <taxon>Bacteria</taxon>
        <taxon>Pseudomonadati</taxon>
        <taxon>Pseudomonadota</taxon>
        <taxon>Alphaproteobacteria</taxon>
        <taxon>Hyphomicrobiales</taxon>
        <taxon>Phyllobacteriaceae</taxon>
        <taxon>Mesorhizobium</taxon>
    </lineage>
</organism>
<protein>
    <recommendedName>
        <fullName evidence="1">Protein SlyX homolog</fullName>
    </recommendedName>
</protein>
<proteinExistence type="inferred from homology"/>
<accession>Q98GW1</accession>
<name>SLYX_RHILO</name>
<evidence type="ECO:0000255" key="1">
    <source>
        <dbReference type="HAMAP-Rule" id="MF_00715"/>
    </source>
</evidence>
<gene>
    <name evidence="1" type="primary">slyX</name>
    <name type="ordered locus">msl3152</name>
</gene>
<feature type="chain" id="PRO_0000209210" description="Protein SlyX homolog">
    <location>
        <begin position="1"/>
        <end position="67"/>
    </location>
</feature>
<reference key="1">
    <citation type="journal article" date="2000" name="DNA Res.">
        <title>Complete genome structure of the nitrogen-fixing symbiotic bacterium Mesorhizobium loti.</title>
        <authorList>
            <person name="Kaneko T."/>
            <person name="Nakamura Y."/>
            <person name="Sato S."/>
            <person name="Asamizu E."/>
            <person name="Kato T."/>
            <person name="Sasamoto S."/>
            <person name="Watanabe A."/>
            <person name="Idesawa K."/>
            <person name="Ishikawa A."/>
            <person name="Kawashima K."/>
            <person name="Kimura T."/>
            <person name="Kishida Y."/>
            <person name="Kiyokawa C."/>
            <person name="Kohara M."/>
            <person name="Matsumoto M."/>
            <person name="Matsuno A."/>
            <person name="Mochizuki Y."/>
            <person name="Nakayama S."/>
            <person name="Nakazaki N."/>
            <person name="Shimpo S."/>
            <person name="Sugimoto M."/>
            <person name="Takeuchi C."/>
            <person name="Yamada M."/>
            <person name="Tabata S."/>
        </authorList>
    </citation>
    <scope>NUCLEOTIDE SEQUENCE [LARGE SCALE GENOMIC DNA]</scope>
    <source>
        <strain>LMG 29417 / CECT 9101 / MAFF 303099</strain>
    </source>
</reference>
<comment type="similarity">
    <text evidence="1">Belongs to the SlyX family.</text>
</comment>